<comment type="function">
    <text evidence="1">Catalyzes the 2-thiolation of uridine at the wobble position (U34) of tRNA, leading to the formation of s(2)U34.</text>
</comment>
<comment type="catalytic activity">
    <reaction evidence="1">
        <text>S-sulfanyl-L-cysteinyl-[protein] + uridine(34) in tRNA + AH2 + ATP = 2-thiouridine(34) in tRNA + L-cysteinyl-[protein] + A + AMP + diphosphate + H(+)</text>
        <dbReference type="Rhea" id="RHEA:47032"/>
        <dbReference type="Rhea" id="RHEA-COMP:10131"/>
        <dbReference type="Rhea" id="RHEA-COMP:11726"/>
        <dbReference type="Rhea" id="RHEA-COMP:11727"/>
        <dbReference type="Rhea" id="RHEA-COMP:11728"/>
        <dbReference type="ChEBI" id="CHEBI:13193"/>
        <dbReference type="ChEBI" id="CHEBI:15378"/>
        <dbReference type="ChEBI" id="CHEBI:17499"/>
        <dbReference type="ChEBI" id="CHEBI:29950"/>
        <dbReference type="ChEBI" id="CHEBI:30616"/>
        <dbReference type="ChEBI" id="CHEBI:33019"/>
        <dbReference type="ChEBI" id="CHEBI:61963"/>
        <dbReference type="ChEBI" id="CHEBI:65315"/>
        <dbReference type="ChEBI" id="CHEBI:87170"/>
        <dbReference type="ChEBI" id="CHEBI:456215"/>
        <dbReference type="EC" id="2.8.1.13"/>
    </reaction>
</comment>
<comment type="subcellular location">
    <subcellularLocation>
        <location evidence="1">Cytoplasm</location>
    </subcellularLocation>
</comment>
<comment type="similarity">
    <text evidence="1">Belongs to the MnmA/TRMU family.</text>
</comment>
<name>MNMA_SHESR</name>
<organism>
    <name type="scientific">Shewanella sp. (strain MR-7)</name>
    <dbReference type="NCBI Taxonomy" id="60481"/>
    <lineage>
        <taxon>Bacteria</taxon>
        <taxon>Pseudomonadati</taxon>
        <taxon>Pseudomonadota</taxon>
        <taxon>Gammaproteobacteria</taxon>
        <taxon>Alteromonadales</taxon>
        <taxon>Shewanellaceae</taxon>
        <taxon>Shewanella</taxon>
    </lineage>
</organism>
<dbReference type="EC" id="2.8.1.13" evidence="1"/>
<dbReference type="EMBL" id="CP000444">
    <property type="protein sequence ID" value="ABI42672.1"/>
    <property type="molecule type" value="Genomic_DNA"/>
</dbReference>
<dbReference type="SMR" id="Q0HW33"/>
<dbReference type="KEGG" id="shm:Shewmr7_1678"/>
<dbReference type="HOGENOM" id="CLU_035188_1_0_6"/>
<dbReference type="GO" id="GO:0005737">
    <property type="term" value="C:cytoplasm"/>
    <property type="evidence" value="ECO:0007669"/>
    <property type="project" value="UniProtKB-SubCell"/>
</dbReference>
<dbReference type="GO" id="GO:0005524">
    <property type="term" value="F:ATP binding"/>
    <property type="evidence" value="ECO:0007669"/>
    <property type="project" value="UniProtKB-KW"/>
</dbReference>
<dbReference type="GO" id="GO:0000049">
    <property type="term" value="F:tRNA binding"/>
    <property type="evidence" value="ECO:0007669"/>
    <property type="project" value="UniProtKB-KW"/>
</dbReference>
<dbReference type="GO" id="GO:0103016">
    <property type="term" value="F:tRNA-uridine 2-sulfurtransferase activity"/>
    <property type="evidence" value="ECO:0007669"/>
    <property type="project" value="UniProtKB-EC"/>
</dbReference>
<dbReference type="GO" id="GO:0002143">
    <property type="term" value="P:tRNA wobble position uridine thiolation"/>
    <property type="evidence" value="ECO:0007669"/>
    <property type="project" value="TreeGrafter"/>
</dbReference>
<dbReference type="CDD" id="cd01998">
    <property type="entry name" value="MnmA_TRMU-like"/>
    <property type="match status" value="1"/>
</dbReference>
<dbReference type="FunFam" id="2.30.30.280:FF:000001">
    <property type="entry name" value="tRNA-specific 2-thiouridylase MnmA"/>
    <property type="match status" value="1"/>
</dbReference>
<dbReference type="FunFam" id="2.40.30.10:FF:000023">
    <property type="entry name" value="tRNA-specific 2-thiouridylase MnmA"/>
    <property type="match status" value="1"/>
</dbReference>
<dbReference type="FunFam" id="3.40.50.620:FF:000004">
    <property type="entry name" value="tRNA-specific 2-thiouridylase MnmA"/>
    <property type="match status" value="1"/>
</dbReference>
<dbReference type="Gene3D" id="2.30.30.280">
    <property type="entry name" value="Adenine nucleotide alpha hydrolases-like domains"/>
    <property type="match status" value="1"/>
</dbReference>
<dbReference type="Gene3D" id="3.40.50.620">
    <property type="entry name" value="HUPs"/>
    <property type="match status" value="1"/>
</dbReference>
<dbReference type="Gene3D" id="2.40.30.10">
    <property type="entry name" value="Translation factors"/>
    <property type="match status" value="1"/>
</dbReference>
<dbReference type="HAMAP" id="MF_00144">
    <property type="entry name" value="tRNA_thiouridyl_MnmA"/>
    <property type="match status" value="1"/>
</dbReference>
<dbReference type="InterPro" id="IPR004506">
    <property type="entry name" value="MnmA-like"/>
</dbReference>
<dbReference type="InterPro" id="IPR046885">
    <property type="entry name" value="MnmA-like_C"/>
</dbReference>
<dbReference type="InterPro" id="IPR046884">
    <property type="entry name" value="MnmA-like_central"/>
</dbReference>
<dbReference type="InterPro" id="IPR023382">
    <property type="entry name" value="MnmA-like_central_sf"/>
</dbReference>
<dbReference type="InterPro" id="IPR014729">
    <property type="entry name" value="Rossmann-like_a/b/a_fold"/>
</dbReference>
<dbReference type="NCBIfam" id="NF001138">
    <property type="entry name" value="PRK00143.1"/>
    <property type="match status" value="1"/>
</dbReference>
<dbReference type="NCBIfam" id="TIGR00420">
    <property type="entry name" value="trmU"/>
    <property type="match status" value="1"/>
</dbReference>
<dbReference type="PANTHER" id="PTHR11933:SF5">
    <property type="entry name" value="MITOCHONDRIAL TRNA-SPECIFIC 2-THIOURIDYLASE 1"/>
    <property type="match status" value="1"/>
</dbReference>
<dbReference type="PANTHER" id="PTHR11933">
    <property type="entry name" value="TRNA 5-METHYLAMINOMETHYL-2-THIOURIDYLATE -METHYLTRANSFERASE"/>
    <property type="match status" value="1"/>
</dbReference>
<dbReference type="Pfam" id="PF03054">
    <property type="entry name" value="tRNA_Me_trans"/>
    <property type="match status" value="1"/>
</dbReference>
<dbReference type="Pfam" id="PF20258">
    <property type="entry name" value="tRNA_Me_trans_C"/>
    <property type="match status" value="1"/>
</dbReference>
<dbReference type="Pfam" id="PF20259">
    <property type="entry name" value="tRNA_Me_trans_M"/>
    <property type="match status" value="1"/>
</dbReference>
<dbReference type="SUPFAM" id="SSF52402">
    <property type="entry name" value="Adenine nucleotide alpha hydrolases-like"/>
    <property type="match status" value="1"/>
</dbReference>
<gene>
    <name evidence="1" type="primary">mnmA</name>
    <name type="synonym">trmU</name>
    <name type="ordered locus">Shewmr7_1678</name>
</gene>
<protein>
    <recommendedName>
        <fullName evidence="1">tRNA-specific 2-thiouridylase MnmA</fullName>
        <ecNumber evidence="1">2.8.1.13</ecNumber>
    </recommendedName>
</protein>
<feature type="chain" id="PRO_1000009575" description="tRNA-specific 2-thiouridylase MnmA">
    <location>
        <begin position="1"/>
        <end position="372"/>
    </location>
</feature>
<feature type="region of interest" description="Interaction with target base in tRNA" evidence="1">
    <location>
        <begin position="102"/>
        <end position="104"/>
    </location>
</feature>
<feature type="region of interest" description="Interaction with tRNA" evidence="1">
    <location>
        <begin position="155"/>
        <end position="157"/>
    </location>
</feature>
<feature type="region of interest" description="Interaction with tRNA" evidence="1">
    <location>
        <begin position="317"/>
        <end position="318"/>
    </location>
</feature>
<feature type="active site" description="Nucleophile" evidence="1">
    <location>
        <position position="107"/>
    </location>
</feature>
<feature type="active site" description="Cysteine persulfide intermediate" evidence="1">
    <location>
        <position position="205"/>
    </location>
</feature>
<feature type="binding site" evidence="1">
    <location>
        <begin position="16"/>
        <end position="23"/>
    </location>
    <ligand>
        <name>ATP</name>
        <dbReference type="ChEBI" id="CHEBI:30616"/>
    </ligand>
</feature>
<feature type="binding site" evidence="1">
    <location>
        <position position="42"/>
    </location>
    <ligand>
        <name>ATP</name>
        <dbReference type="ChEBI" id="CHEBI:30616"/>
    </ligand>
</feature>
<feature type="binding site" evidence="1">
    <location>
        <position position="132"/>
    </location>
    <ligand>
        <name>ATP</name>
        <dbReference type="ChEBI" id="CHEBI:30616"/>
    </ligand>
</feature>
<feature type="site" description="Interaction with tRNA" evidence="1">
    <location>
        <position position="133"/>
    </location>
</feature>
<feature type="site" description="Interaction with tRNA" evidence="1">
    <location>
        <position position="350"/>
    </location>
</feature>
<feature type="disulfide bond" description="Alternate" evidence="1">
    <location>
        <begin position="107"/>
        <end position="205"/>
    </location>
</feature>
<proteinExistence type="inferred from homology"/>
<accession>Q0HW33</accession>
<evidence type="ECO:0000255" key="1">
    <source>
        <dbReference type="HAMAP-Rule" id="MF_00144"/>
    </source>
</evidence>
<reference key="1">
    <citation type="submission" date="2006-08" db="EMBL/GenBank/DDBJ databases">
        <title>Complete sequence of chromosome 1 of Shewanella sp. MR-7.</title>
        <authorList>
            <person name="Copeland A."/>
            <person name="Lucas S."/>
            <person name="Lapidus A."/>
            <person name="Barry K."/>
            <person name="Detter J.C."/>
            <person name="Glavina del Rio T."/>
            <person name="Hammon N."/>
            <person name="Israni S."/>
            <person name="Dalin E."/>
            <person name="Tice H."/>
            <person name="Pitluck S."/>
            <person name="Kiss H."/>
            <person name="Brettin T."/>
            <person name="Bruce D."/>
            <person name="Han C."/>
            <person name="Tapia R."/>
            <person name="Gilna P."/>
            <person name="Schmutz J."/>
            <person name="Larimer F."/>
            <person name="Land M."/>
            <person name="Hauser L."/>
            <person name="Kyrpides N."/>
            <person name="Mikhailova N."/>
            <person name="Nealson K."/>
            <person name="Konstantinidis K."/>
            <person name="Klappenbach J."/>
            <person name="Tiedje J."/>
            <person name="Richardson P."/>
        </authorList>
    </citation>
    <scope>NUCLEOTIDE SEQUENCE [LARGE SCALE GENOMIC DNA]</scope>
    <source>
        <strain>MR-7</strain>
    </source>
</reference>
<sequence length="372" mass="41669">MTSIEPTHTGKKVIVGMSGGVDSSVSAYLLMQQGYQVEGLFMKNWEEDDNDEYCAAAEDLKDAQAVCDKLGIKLHTVNFAAEYWDNVFEYFLAEYKAGRTPNPDIMCNKEIKFKAFLDFADDILDADYIAMGHYVRRRDNADGTTQMLRGVDNNKDQSYFLYTLSHEQVARSLFPVGELEKHEVREIAKKMGLITHDKKDSTGICFIGERKFTEFLGNYLPAQPGNIETAEGEVIGKHQGLMYHTLGQRKGLGIGGMKNSNDDPWYVVDKDLKRNVLVVGQGGHHPRLMSNGMFVNQLHWVDRKGPVEGSQIVVKTRYRQQDIPCTLTYLDDNTLKVVFDEPVAAVTPGQSAVFYDGDVCLGGGIIDQLIRG</sequence>
<keyword id="KW-0067">ATP-binding</keyword>
<keyword id="KW-0963">Cytoplasm</keyword>
<keyword id="KW-1015">Disulfide bond</keyword>
<keyword id="KW-0547">Nucleotide-binding</keyword>
<keyword id="KW-0694">RNA-binding</keyword>
<keyword id="KW-0808">Transferase</keyword>
<keyword id="KW-0819">tRNA processing</keyword>
<keyword id="KW-0820">tRNA-binding</keyword>